<reference key="1">
    <citation type="submission" date="2006-12" db="EMBL/GenBank/DDBJ databases">
        <title>Complete sequence of chromosome of Mycobacterium sp. KMS.</title>
        <authorList>
            <consortium name="US DOE Joint Genome Institute"/>
            <person name="Copeland A."/>
            <person name="Lucas S."/>
            <person name="Lapidus A."/>
            <person name="Barry K."/>
            <person name="Detter J.C."/>
            <person name="Glavina del Rio T."/>
            <person name="Hammon N."/>
            <person name="Israni S."/>
            <person name="Dalin E."/>
            <person name="Tice H."/>
            <person name="Pitluck S."/>
            <person name="Kiss H."/>
            <person name="Brettin T."/>
            <person name="Bruce D."/>
            <person name="Han C."/>
            <person name="Tapia R."/>
            <person name="Gilna P."/>
            <person name="Schmutz J."/>
            <person name="Larimer F."/>
            <person name="Land M."/>
            <person name="Hauser L."/>
            <person name="Kyrpides N."/>
            <person name="Mikhailova N."/>
            <person name="Miller C.D."/>
            <person name="Richardson P."/>
        </authorList>
    </citation>
    <scope>NUCLEOTIDE SEQUENCE [LARGE SCALE GENOMIC DNA]</scope>
    <source>
        <strain>KMS</strain>
    </source>
</reference>
<gene>
    <name evidence="1" type="primary">rplF</name>
    <name type="ordered locus">Mkms_1047</name>
</gene>
<feature type="chain" id="PRO_1000055268" description="Large ribosomal subunit protein uL6">
    <location>
        <begin position="1"/>
        <end position="179"/>
    </location>
</feature>
<organism>
    <name type="scientific">Mycobacterium sp. (strain KMS)</name>
    <dbReference type="NCBI Taxonomy" id="189918"/>
    <lineage>
        <taxon>Bacteria</taxon>
        <taxon>Bacillati</taxon>
        <taxon>Actinomycetota</taxon>
        <taxon>Actinomycetes</taxon>
        <taxon>Mycobacteriales</taxon>
        <taxon>Mycobacteriaceae</taxon>
        <taxon>Mycobacterium</taxon>
    </lineage>
</organism>
<accession>A1UBQ3</accession>
<comment type="function">
    <text evidence="1">This protein binds to the 23S rRNA, and is important in its secondary structure. It is located near the subunit interface in the base of the L7/L12 stalk, and near the tRNA binding site of the peptidyltransferase center.</text>
</comment>
<comment type="subunit">
    <text evidence="1">Part of the 50S ribosomal subunit.</text>
</comment>
<comment type="similarity">
    <text evidence="1">Belongs to the universal ribosomal protein uL6 family.</text>
</comment>
<name>RL6_MYCSK</name>
<protein>
    <recommendedName>
        <fullName evidence="1">Large ribosomal subunit protein uL6</fullName>
    </recommendedName>
    <alternativeName>
        <fullName evidence="2">50S ribosomal protein L6</fullName>
    </alternativeName>
</protein>
<sequence>MSRIGKQPVPVPAGVDVTIEGQNVSVKGPKGTLSLAVAEPIVVARDDEGAIVVTRPNDERRNRSLHGLSRTLVANLVEGVTQGYTTKMEIYGVGYRVALKGSNLEFALGYSHPVVIEPPEGITFAVETPTKFSVSGIDKQKVGQISAIIRRLRRPDPYKGKGVRYEGEQIRRKVGKTGK</sequence>
<proteinExistence type="inferred from homology"/>
<dbReference type="EMBL" id="CP000518">
    <property type="protein sequence ID" value="ABL90261.1"/>
    <property type="molecule type" value="Genomic_DNA"/>
</dbReference>
<dbReference type="SMR" id="A1UBQ3"/>
<dbReference type="STRING" id="189918.Mkms_1047"/>
<dbReference type="KEGG" id="mkm:Mkms_1047"/>
<dbReference type="HOGENOM" id="CLU_065464_1_2_11"/>
<dbReference type="OrthoDB" id="9805007at2"/>
<dbReference type="GO" id="GO:0022625">
    <property type="term" value="C:cytosolic large ribosomal subunit"/>
    <property type="evidence" value="ECO:0007669"/>
    <property type="project" value="TreeGrafter"/>
</dbReference>
<dbReference type="GO" id="GO:0019843">
    <property type="term" value="F:rRNA binding"/>
    <property type="evidence" value="ECO:0007669"/>
    <property type="project" value="UniProtKB-UniRule"/>
</dbReference>
<dbReference type="GO" id="GO:0003735">
    <property type="term" value="F:structural constituent of ribosome"/>
    <property type="evidence" value="ECO:0007669"/>
    <property type="project" value="InterPro"/>
</dbReference>
<dbReference type="GO" id="GO:0002181">
    <property type="term" value="P:cytoplasmic translation"/>
    <property type="evidence" value="ECO:0007669"/>
    <property type="project" value="TreeGrafter"/>
</dbReference>
<dbReference type="FunFam" id="3.90.930.12:FF:000001">
    <property type="entry name" value="50S ribosomal protein L6"/>
    <property type="match status" value="1"/>
</dbReference>
<dbReference type="FunFam" id="3.90.930.12:FF:000002">
    <property type="entry name" value="50S ribosomal protein L6"/>
    <property type="match status" value="1"/>
</dbReference>
<dbReference type="Gene3D" id="3.90.930.12">
    <property type="entry name" value="Ribosomal protein L6, alpha-beta domain"/>
    <property type="match status" value="2"/>
</dbReference>
<dbReference type="HAMAP" id="MF_01365_B">
    <property type="entry name" value="Ribosomal_uL6_B"/>
    <property type="match status" value="1"/>
</dbReference>
<dbReference type="InterPro" id="IPR000702">
    <property type="entry name" value="Ribosomal_uL6-like"/>
</dbReference>
<dbReference type="InterPro" id="IPR036789">
    <property type="entry name" value="Ribosomal_uL6-like_a/b-dom_sf"/>
</dbReference>
<dbReference type="InterPro" id="IPR020040">
    <property type="entry name" value="Ribosomal_uL6_a/b-dom"/>
</dbReference>
<dbReference type="InterPro" id="IPR019906">
    <property type="entry name" value="Ribosomal_uL6_bac-type"/>
</dbReference>
<dbReference type="InterPro" id="IPR002358">
    <property type="entry name" value="Ribosomal_uL6_CS"/>
</dbReference>
<dbReference type="NCBIfam" id="TIGR03654">
    <property type="entry name" value="L6_bact"/>
    <property type="match status" value="1"/>
</dbReference>
<dbReference type="PANTHER" id="PTHR11655">
    <property type="entry name" value="60S/50S RIBOSOMAL PROTEIN L6/L9"/>
    <property type="match status" value="1"/>
</dbReference>
<dbReference type="PANTHER" id="PTHR11655:SF14">
    <property type="entry name" value="LARGE RIBOSOMAL SUBUNIT PROTEIN UL6M"/>
    <property type="match status" value="1"/>
</dbReference>
<dbReference type="Pfam" id="PF00347">
    <property type="entry name" value="Ribosomal_L6"/>
    <property type="match status" value="2"/>
</dbReference>
<dbReference type="PIRSF" id="PIRSF002162">
    <property type="entry name" value="Ribosomal_L6"/>
    <property type="match status" value="1"/>
</dbReference>
<dbReference type="PRINTS" id="PR00059">
    <property type="entry name" value="RIBOSOMALL6"/>
</dbReference>
<dbReference type="SUPFAM" id="SSF56053">
    <property type="entry name" value="Ribosomal protein L6"/>
    <property type="match status" value="2"/>
</dbReference>
<dbReference type="PROSITE" id="PS00525">
    <property type="entry name" value="RIBOSOMAL_L6_1"/>
    <property type="match status" value="1"/>
</dbReference>
<evidence type="ECO:0000255" key="1">
    <source>
        <dbReference type="HAMAP-Rule" id="MF_01365"/>
    </source>
</evidence>
<evidence type="ECO:0000305" key="2"/>
<keyword id="KW-0687">Ribonucleoprotein</keyword>
<keyword id="KW-0689">Ribosomal protein</keyword>
<keyword id="KW-0694">RNA-binding</keyword>
<keyword id="KW-0699">rRNA-binding</keyword>